<sequence>MIRTWIALVPNDHRARLIGFALLAFCSVVARAVGTVLLVPLMAALFGEAPQRAWLWLGWLSAATVAGWVLDAVTARIGIELGFAVLNHTQHDVADRLPVVRLDWFTAENTATARQAIAATGPELVGLVVNLVTPLTSAILLPAVIALALLPISWQLGVAALAGVPLLLGALWASAAFARRADTAADKANTALTERIIEFARTQQALRAARRVEPARSLVGNALASQHTATMRLLGMQIPGQLLFSIASQLALIVLAGTTAALTITGTLTVPEAIALIVVMVRYLEPFTAVSELAPALESTRATLGRIGSVLTAPVMVAGSGTWRDGAVVPRIEFDDVAFGYDGGSGPVLDGVSFCLQPGTTTAIVGPSGCGKSTILALIAGLHQPTRGRVLIDGTDVATLDARAQQAVCSVVFQHPYLFHGTIRDNVFAADPGASDDQFAQAVRLARVDELIARLPDGANTIVGEAGSALSGGERQRVSIARALLKAAPVLLVDEATSALDAENEAAVVDALAADPRSRTRVIVAHRLASIRHADRVLFVDDGRVVEDGSISELLTAGGRFSQFWRQQHEAAEWQILAE</sequence>
<name>IRTB_MYCTO</name>
<dbReference type="EC" id="7.2.2.-" evidence="1"/>
<dbReference type="EMBL" id="AE000516">
    <property type="protein sequence ID" value="AAK45655.1"/>
    <property type="molecule type" value="Genomic_DNA"/>
</dbReference>
<dbReference type="PIR" id="D70740">
    <property type="entry name" value="D70740"/>
</dbReference>
<dbReference type="RefSeq" id="WP_003900322.1">
    <property type="nucleotide sequence ID" value="NZ_KK341227.1"/>
</dbReference>
<dbReference type="SMR" id="P9WQJ6"/>
<dbReference type="GeneID" id="45425328"/>
<dbReference type="KEGG" id="mtc:MT1392"/>
<dbReference type="PATRIC" id="fig|83331.31.peg.1499"/>
<dbReference type="HOGENOM" id="CLU_000604_84_9_11"/>
<dbReference type="Proteomes" id="UP000001020">
    <property type="component" value="Chromosome"/>
</dbReference>
<dbReference type="GO" id="GO:0005886">
    <property type="term" value="C:plasma membrane"/>
    <property type="evidence" value="ECO:0007669"/>
    <property type="project" value="UniProtKB-SubCell"/>
</dbReference>
<dbReference type="GO" id="GO:0140359">
    <property type="term" value="F:ABC-type transporter activity"/>
    <property type="evidence" value="ECO:0007669"/>
    <property type="project" value="InterPro"/>
</dbReference>
<dbReference type="GO" id="GO:0005524">
    <property type="term" value="F:ATP binding"/>
    <property type="evidence" value="ECO:0007669"/>
    <property type="project" value="UniProtKB-KW"/>
</dbReference>
<dbReference type="GO" id="GO:0016887">
    <property type="term" value="F:ATP hydrolysis activity"/>
    <property type="evidence" value="ECO:0007669"/>
    <property type="project" value="InterPro"/>
</dbReference>
<dbReference type="GO" id="GO:0034040">
    <property type="term" value="F:ATPase-coupled lipid transmembrane transporter activity"/>
    <property type="evidence" value="ECO:0007669"/>
    <property type="project" value="TreeGrafter"/>
</dbReference>
<dbReference type="FunFam" id="3.40.50.300:FF:000221">
    <property type="entry name" value="Multidrug ABC transporter ATP-binding protein"/>
    <property type="match status" value="1"/>
</dbReference>
<dbReference type="Gene3D" id="1.20.1560.10">
    <property type="entry name" value="ABC transporter type 1, transmembrane domain"/>
    <property type="match status" value="1"/>
</dbReference>
<dbReference type="Gene3D" id="3.40.50.300">
    <property type="entry name" value="P-loop containing nucleotide triphosphate hydrolases"/>
    <property type="match status" value="1"/>
</dbReference>
<dbReference type="InterPro" id="IPR003593">
    <property type="entry name" value="AAA+_ATPase"/>
</dbReference>
<dbReference type="InterPro" id="IPR011527">
    <property type="entry name" value="ABC1_TM_dom"/>
</dbReference>
<dbReference type="InterPro" id="IPR036640">
    <property type="entry name" value="ABC1_TM_sf"/>
</dbReference>
<dbReference type="InterPro" id="IPR003439">
    <property type="entry name" value="ABC_transporter-like_ATP-bd"/>
</dbReference>
<dbReference type="InterPro" id="IPR017871">
    <property type="entry name" value="ABC_transporter-like_CS"/>
</dbReference>
<dbReference type="InterPro" id="IPR027417">
    <property type="entry name" value="P-loop_NTPase"/>
</dbReference>
<dbReference type="InterPro" id="IPR039421">
    <property type="entry name" value="Type_1_exporter"/>
</dbReference>
<dbReference type="PANTHER" id="PTHR24221">
    <property type="entry name" value="ATP-BINDING CASSETTE SUB-FAMILY B"/>
    <property type="match status" value="1"/>
</dbReference>
<dbReference type="PANTHER" id="PTHR24221:SF654">
    <property type="entry name" value="ATP-BINDING CASSETTE SUB-FAMILY B MEMBER 6"/>
    <property type="match status" value="1"/>
</dbReference>
<dbReference type="Pfam" id="PF00005">
    <property type="entry name" value="ABC_tran"/>
    <property type="match status" value="1"/>
</dbReference>
<dbReference type="SMART" id="SM00382">
    <property type="entry name" value="AAA"/>
    <property type="match status" value="1"/>
</dbReference>
<dbReference type="SUPFAM" id="SSF90123">
    <property type="entry name" value="ABC transporter transmembrane region"/>
    <property type="match status" value="1"/>
</dbReference>
<dbReference type="SUPFAM" id="SSF52540">
    <property type="entry name" value="P-loop containing nucleoside triphosphate hydrolases"/>
    <property type="match status" value="1"/>
</dbReference>
<dbReference type="PROSITE" id="PS50929">
    <property type="entry name" value="ABC_TM1F"/>
    <property type="match status" value="1"/>
</dbReference>
<dbReference type="PROSITE" id="PS00211">
    <property type="entry name" value="ABC_TRANSPORTER_1"/>
    <property type="match status" value="1"/>
</dbReference>
<dbReference type="PROSITE" id="PS50893">
    <property type="entry name" value="ABC_TRANSPORTER_2"/>
    <property type="match status" value="1"/>
</dbReference>
<keyword id="KW-0067">ATP-binding</keyword>
<keyword id="KW-0997">Cell inner membrane</keyword>
<keyword id="KW-1003">Cell membrane</keyword>
<keyword id="KW-0472">Membrane</keyword>
<keyword id="KW-0547">Nucleotide-binding</keyword>
<keyword id="KW-1185">Reference proteome</keyword>
<keyword id="KW-1278">Translocase</keyword>
<keyword id="KW-0812">Transmembrane</keyword>
<keyword id="KW-1133">Transmembrane helix</keyword>
<keyword id="KW-0813">Transport</keyword>
<protein>
    <recommendedName>
        <fullName evidence="1">Mycobactin import ATP-binding/permease protein IrtB</fullName>
        <ecNumber evidence="1">7.2.2.-</ecNumber>
    </recommendedName>
    <alternativeName>
        <fullName>Iron-regulated transporter B</fullName>
    </alternativeName>
</protein>
<evidence type="ECO:0000250" key="1">
    <source>
        <dbReference type="UniProtKB" id="G7CBF6"/>
    </source>
</evidence>
<evidence type="ECO:0000255" key="2">
    <source>
        <dbReference type="PROSITE-ProRule" id="PRU00434"/>
    </source>
</evidence>
<evidence type="ECO:0000255" key="3">
    <source>
        <dbReference type="PROSITE-ProRule" id="PRU00441"/>
    </source>
</evidence>
<evidence type="ECO:0000305" key="4"/>
<proteinExistence type="inferred from homology"/>
<gene>
    <name type="primary">irtB</name>
    <name type="ordered locus">MT1392</name>
</gene>
<reference key="1">
    <citation type="journal article" date="2002" name="J. Bacteriol.">
        <title>Whole-genome comparison of Mycobacterium tuberculosis clinical and laboratory strains.</title>
        <authorList>
            <person name="Fleischmann R.D."/>
            <person name="Alland D."/>
            <person name="Eisen J.A."/>
            <person name="Carpenter L."/>
            <person name="White O."/>
            <person name="Peterson J.D."/>
            <person name="DeBoy R.T."/>
            <person name="Dodson R.J."/>
            <person name="Gwinn M.L."/>
            <person name="Haft D.H."/>
            <person name="Hickey E.K."/>
            <person name="Kolonay J.F."/>
            <person name="Nelson W.C."/>
            <person name="Umayam L.A."/>
            <person name="Ermolaeva M.D."/>
            <person name="Salzberg S.L."/>
            <person name="Delcher A."/>
            <person name="Utterback T.R."/>
            <person name="Weidman J.F."/>
            <person name="Khouri H.M."/>
            <person name="Gill J."/>
            <person name="Mikula A."/>
            <person name="Bishai W."/>
            <person name="Jacobs W.R. Jr."/>
            <person name="Venter J.C."/>
            <person name="Fraser C.M."/>
        </authorList>
    </citation>
    <scope>NUCLEOTIDE SEQUENCE [LARGE SCALE GENOMIC DNA]</scope>
    <source>
        <strain>CDC 1551 / Oshkosh</strain>
    </source>
</reference>
<accession>P9WQJ6</accession>
<accession>L0T6L2</accession>
<accession>P63393</accession>
<accession>Q11019</accession>
<feature type="chain" id="PRO_0000426764" description="Mycobactin import ATP-binding/permease protein IrtB">
    <location>
        <begin position="1"/>
        <end position="579"/>
    </location>
</feature>
<feature type="topological domain" description="Cytoplasmic" evidence="4">
    <location>
        <begin position="1"/>
        <end position="16"/>
    </location>
</feature>
<feature type="transmembrane region" description="Helical" evidence="3">
    <location>
        <begin position="17"/>
        <end position="37"/>
    </location>
</feature>
<feature type="topological domain" description="Periplasmic" evidence="4">
    <location>
        <begin position="38"/>
        <end position="52"/>
    </location>
</feature>
<feature type="transmembrane region" description="Helical" evidence="3">
    <location>
        <begin position="53"/>
        <end position="73"/>
    </location>
</feature>
<feature type="topological domain" description="Cytoplasmic" evidence="4">
    <location>
        <begin position="74"/>
        <end position="123"/>
    </location>
</feature>
<feature type="transmembrane region" description="Helical" evidence="3">
    <location>
        <begin position="124"/>
        <end position="146"/>
    </location>
</feature>
<feature type="topological domain" description="Periplasmic" evidence="4">
    <location>
        <begin position="147"/>
        <end position="155"/>
    </location>
</feature>
<feature type="transmembrane region" description="Helical" evidence="3">
    <location>
        <begin position="156"/>
        <end position="178"/>
    </location>
</feature>
<feature type="topological domain" description="Cytoplasmic" evidence="4">
    <location>
        <begin position="179"/>
        <end position="237"/>
    </location>
</feature>
<feature type="transmembrane region" description="Helical" evidence="3">
    <location>
        <begin position="238"/>
        <end position="258"/>
    </location>
</feature>
<feature type="topological domain" description="Periplasmic" evidence="4">
    <location>
        <begin position="259"/>
        <end position="579"/>
    </location>
</feature>
<feature type="domain" description="ABC transmembrane type-1" evidence="3">
    <location>
        <begin position="17"/>
        <end position="299"/>
    </location>
</feature>
<feature type="domain" description="ABC transporter" evidence="2">
    <location>
        <begin position="332"/>
        <end position="567"/>
    </location>
</feature>
<feature type="binding site" evidence="2">
    <location>
        <begin position="366"/>
        <end position="373"/>
    </location>
    <ligand>
        <name>ATP</name>
        <dbReference type="ChEBI" id="CHEBI:30616"/>
    </ligand>
</feature>
<organism>
    <name type="scientific">Mycobacterium tuberculosis (strain CDC 1551 / Oshkosh)</name>
    <dbReference type="NCBI Taxonomy" id="83331"/>
    <lineage>
        <taxon>Bacteria</taxon>
        <taxon>Bacillati</taxon>
        <taxon>Actinomycetota</taxon>
        <taxon>Actinomycetes</taxon>
        <taxon>Mycobacteriales</taxon>
        <taxon>Mycobacteriaceae</taxon>
        <taxon>Mycobacterium</taxon>
        <taxon>Mycobacterium tuberculosis complex</taxon>
    </lineage>
</organism>
<comment type="function">
    <text evidence="1">Part of the ABC transporter complex IrtAB involved in the import of iron-bound mycobactin (Fe-MBT) and carboxymycobactin (Fe-cMBT). Transmembrane domains (TMD) form a pore in the membrane and the ATP-binding domain (NBD) is responsible for energy generation.</text>
</comment>
<comment type="subunit">
    <text evidence="1">Forms a heterodimer with IrtA.</text>
</comment>
<comment type="subcellular location">
    <subcellularLocation>
        <location evidence="1">Cell inner membrane</location>
        <topology evidence="1">Multi-pass membrane protein</topology>
    </subcellularLocation>
</comment>
<comment type="domain">
    <text evidence="1">In IrtB the ATP-binding domain (NBD) and the transmembrane domain (TMD) are fused.</text>
</comment>
<comment type="similarity">
    <text evidence="4">Belongs to the ABC transporter superfamily. Siderophore-Fe(3+) uptake transporter (SIUT) (TC 3.A.1.21) family.</text>
</comment>